<protein>
    <recommendedName>
        <fullName>Transcriptional repressor protein KorC</fullName>
    </recommendedName>
</protein>
<proteinExistence type="predicted"/>
<gene>
    <name type="primary">korC</name>
</gene>
<feature type="chain" id="PRO_0000068381" description="Transcriptional repressor protein KorC">
    <location>
        <begin position="1"/>
        <end position="85"/>
    </location>
</feature>
<feature type="DNA-binding region" description="H-T-H motif" evidence="1">
    <location>
        <begin position="28"/>
        <end position="47"/>
    </location>
</feature>
<accession>Q52277</accession>
<keyword id="KW-0238">DNA-binding</keyword>
<keyword id="KW-0614">Plasmid</keyword>
<keyword id="KW-0678">Repressor</keyword>
<keyword id="KW-0804">Transcription</keyword>
<keyword id="KW-0805">Transcription regulation</keyword>
<geneLocation type="plasmid">
    <name>IncP-beta R751</name>
</geneLocation>
<name>KORC1_ECOLX</name>
<sequence>MTNDANIRLECLKPAERWAQPSGEEVREVLRLAGLTGGKAAKVLGLGPKGDRTIRRWVGEDTPIPYAAWALLCDYAGLGLIWKEV</sequence>
<evidence type="ECO:0000255" key="1"/>
<reference key="1">
    <citation type="journal article" date="1995" name="Microbiology">
        <title>Evolution of the korA-oriV segment of promiscuous IncP plasmids.</title>
        <authorList>
            <person name="Thomas C.M."/>
            <person name="Smith C.A."/>
            <person name="Ibbotson J.P."/>
            <person name="Johnston L."/>
            <person name="Wang N."/>
        </authorList>
    </citation>
    <scope>NUCLEOTIDE SEQUENCE [GENOMIC DNA]</scope>
</reference>
<reference key="2">
    <citation type="submission" date="2001-07" db="EMBL/GenBank/DDBJ databases">
        <authorList>
            <person name="Haines A.S."/>
            <person name="Thomas C.M."/>
        </authorList>
    </citation>
    <scope>SEQUENCE REVISION TO 16-17 AND 45-48</scope>
</reference>
<comment type="function">
    <text>Acts with KorA as corepressor in the control of the kilC and kilE operons.</text>
</comment>
<organism>
    <name type="scientific">Escherichia coli</name>
    <dbReference type="NCBI Taxonomy" id="562"/>
    <lineage>
        <taxon>Bacteria</taxon>
        <taxon>Pseudomonadati</taxon>
        <taxon>Pseudomonadota</taxon>
        <taxon>Gammaproteobacteria</taxon>
        <taxon>Enterobacterales</taxon>
        <taxon>Enterobacteriaceae</taxon>
        <taxon>Escherichia</taxon>
    </lineage>
</organism>
<dbReference type="EMBL" id="U67194">
    <property type="protein sequence ID" value="AAC64428.2"/>
    <property type="molecule type" value="Genomic_DNA"/>
</dbReference>
<dbReference type="RefSeq" id="WP_010890115.1">
    <property type="nucleotide sequence ID" value="NZ_JBEEEK010000035.1"/>
</dbReference>
<dbReference type="SMR" id="Q52277"/>
<dbReference type="GO" id="GO:0003677">
    <property type="term" value="F:DNA binding"/>
    <property type="evidence" value="ECO:0007669"/>
    <property type="project" value="UniProtKB-KW"/>
</dbReference>